<comment type="function">
    <text evidence="1">Nucleoside diphosphate sugar hydrolase that hydrolyzes GDP-mannose as its preferred substrate, yielding GMP and mannose-1-phosphate.</text>
</comment>
<comment type="catalytic activity">
    <reaction evidence="1">
        <text>GDP-alpha-D-mannose + H2O = alpha-D-mannose 1-phosphate + GMP + 2 H(+)</text>
        <dbReference type="Rhea" id="RHEA:27978"/>
        <dbReference type="ChEBI" id="CHEBI:15377"/>
        <dbReference type="ChEBI" id="CHEBI:15378"/>
        <dbReference type="ChEBI" id="CHEBI:57527"/>
        <dbReference type="ChEBI" id="CHEBI:58115"/>
        <dbReference type="ChEBI" id="CHEBI:58409"/>
    </reaction>
</comment>
<comment type="cofactor">
    <cofactor evidence="1">
        <name>Mg(2+)</name>
        <dbReference type="ChEBI" id="CHEBI:18420"/>
    </cofactor>
</comment>
<comment type="subunit">
    <text evidence="1">Homodimer.</text>
</comment>
<comment type="domain">
    <text evidence="1">In the dimer, the N-terminal domains are swapped between the two monomers, such that residues of both chains contribute to the active site.</text>
</comment>
<comment type="similarity">
    <text evidence="3">Belongs to the Nudix hydrolase family. NudK subfamily.</text>
</comment>
<protein>
    <recommendedName>
        <fullName>GDP-mannose pyrophosphatase</fullName>
        <ecNumber evidence="1">3.6.1.-</ecNumber>
    </recommendedName>
    <alternativeName>
        <fullName>GDP-mannose hydrolase</fullName>
    </alternativeName>
    <alternativeName>
        <fullName>GDPMK</fullName>
    </alternativeName>
</protein>
<accession>B1LNB6</accession>
<organism>
    <name type="scientific">Escherichia coli (strain SMS-3-5 / SECEC)</name>
    <dbReference type="NCBI Taxonomy" id="439855"/>
    <lineage>
        <taxon>Bacteria</taxon>
        <taxon>Pseudomonadati</taxon>
        <taxon>Pseudomonadota</taxon>
        <taxon>Gammaproteobacteria</taxon>
        <taxon>Enterobacterales</taxon>
        <taxon>Enterobacteriaceae</taxon>
        <taxon>Escherichia</taxon>
    </lineage>
</organism>
<name>NUDK_ECOSM</name>
<sequence length="191" mass="21706">MTQQITLIKDKILSDNYFTLHNITYDLTRKDGEVIRHKREVYDRGNGATILLYNAKKKTVVLIRQFRVATWVNGNESGQLIETCAGLLDNDEPEVCIRKEAIEETGYEVGEVRKLFELYMSPGGVTELIHFFIAEYSDSQRANAGGGVEDEDIEVLELPFSQALEMIKTGEIRDGKTVLLLNYLQTSHLMD</sequence>
<gene>
    <name type="primary">nudK</name>
    <name type="ordered locus">EcSMS35_2613</name>
</gene>
<reference key="1">
    <citation type="journal article" date="2008" name="J. Bacteriol.">
        <title>Insights into the environmental resistance gene pool from the genome sequence of the multidrug-resistant environmental isolate Escherichia coli SMS-3-5.</title>
        <authorList>
            <person name="Fricke W.F."/>
            <person name="Wright M.S."/>
            <person name="Lindell A.H."/>
            <person name="Harkins D.M."/>
            <person name="Baker-Austin C."/>
            <person name="Ravel J."/>
            <person name="Stepanauskas R."/>
        </authorList>
    </citation>
    <scope>NUCLEOTIDE SEQUENCE [LARGE SCALE GENOMIC DNA]</scope>
    <source>
        <strain>SMS-3-5 / SECEC</strain>
    </source>
</reference>
<proteinExistence type="inferred from homology"/>
<feature type="chain" id="PRO_0000342484" description="GDP-mannose pyrophosphatase">
    <location>
        <begin position="1"/>
        <end position="191"/>
    </location>
</feature>
<feature type="domain" description="Nudix hydrolase" evidence="2">
    <location>
        <begin position="43"/>
        <end position="180"/>
    </location>
</feature>
<feature type="short sequence motif" description="Nudix box">
    <location>
        <begin position="86"/>
        <end position="106"/>
    </location>
</feature>
<feature type="binding site" description="in other chain" evidence="1">
    <location>
        <position position="17"/>
    </location>
    <ligand>
        <name>GDP-alpha-D-mannose</name>
        <dbReference type="ChEBI" id="CHEBI:57527"/>
        <note>ligand shared between dimeric partners</note>
    </ligand>
</feature>
<feature type="binding site" evidence="1">
    <location>
        <begin position="38"/>
        <end position="40"/>
    </location>
    <ligand>
        <name>GDP-alpha-D-mannose</name>
        <dbReference type="ChEBI" id="CHEBI:57527"/>
        <note>ligand shared between dimeric partners</note>
    </ligand>
</feature>
<feature type="binding site" description="in other chain" evidence="1">
    <location>
        <position position="67"/>
    </location>
    <ligand>
        <name>GDP-alpha-D-mannose</name>
        <dbReference type="ChEBI" id="CHEBI:57527"/>
        <note>ligand shared between dimeric partners</note>
    </ligand>
</feature>
<feature type="binding site" description="in other chain" evidence="1">
    <location>
        <begin position="85"/>
        <end position="87"/>
    </location>
    <ligand>
        <name>GDP-alpha-D-mannose</name>
        <dbReference type="ChEBI" id="CHEBI:57527"/>
        <note>ligand shared between dimeric partners</note>
    </ligand>
</feature>
<feature type="binding site" evidence="1">
    <location>
        <position position="85"/>
    </location>
    <ligand>
        <name>Mg(2+)</name>
        <dbReference type="ChEBI" id="CHEBI:18420"/>
        <label>1</label>
    </ligand>
</feature>
<feature type="binding site" evidence="1">
    <location>
        <position position="100"/>
    </location>
    <ligand>
        <name>Mg(2+)</name>
        <dbReference type="ChEBI" id="CHEBI:18420"/>
        <label>2</label>
    </ligand>
</feature>
<feature type="binding site" description="in other chain" evidence="1">
    <location>
        <position position="104"/>
    </location>
    <ligand>
        <name>GDP-alpha-D-mannose</name>
        <dbReference type="ChEBI" id="CHEBI:57527"/>
        <note>ligand shared between dimeric partners</note>
    </ligand>
</feature>
<feature type="binding site" evidence="1">
    <location>
        <position position="104"/>
    </location>
    <ligand>
        <name>Mg(2+)</name>
        <dbReference type="ChEBI" id="CHEBI:18420"/>
        <label>1</label>
    </ligand>
</feature>
<feature type="binding site" evidence="1">
    <location>
        <position position="104"/>
    </location>
    <ligand>
        <name>Mg(2+)</name>
        <dbReference type="ChEBI" id="CHEBI:18420"/>
        <label>2</label>
    </ligand>
</feature>
<feature type="binding site" description="in other chain" evidence="1">
    <location>
        <position position="127"/>
    </location>
    <ligand>
        <name>GDP-alpha-D-mannose</name>
        <dbReference type="ChEBI" id="CHEBI:57527"/>
        <note>ligand shared between dimeric partners</note>
    </ligand>
</feature>
<feature type="binding site" description="in other chain" evidence="1">
    <location>
        <begin position="150"/>
        <end position="151"/>
    </location>
    <ligand>
        <name>GDP-alpha-D-mannose</name>
        <dbReference type="ChEBI" id="CHEBI:57527"/>
        <note>ligand shared between dimeric partners</note>
    </ligand>
</feature>
<feature type="binding site" evidence="1">
    <location>
        <position position="151"/>
    </location>
    <ligand>
        <name>Mg(2+)</name>
        <dbReference type="ChEBI" id="CHEBI:18420"/>
        <label>2</label>
    </ligand>
</feature>
<feature type="binding site" description="in other chain" evidence="1">
    <location>
        <position position="176"/>
    </location>
    <ligand>
        <name>GDP-alpha-D-mannose</name>
        <dbReference type="ChEBI" id="CHEBI:57527"/>
        <note>ligand shared between dimeric partners</note>
    </ligand>
</feature>
<keyword id="KW-0378">Hydrolase</keyword>
<keyword id="KW-0460">Magnesium</keyword>
<keyword id="KW-0479">Metal-binding</keyword>
<dbReference type="EC" id="3.6.1.-" evidence="1"/>
<dbReference type="EMBL" id="CP000970">
    <property type="protein sequence ID" value="ACB16872.1"/>
    <property type="molecule type" value="Genomic_DNA"/>
</dbReference>
<dbReference type="RefSeq" id="WP_001330582.1">
    <property type="nucleotide sequence ID" value="NC_010498.1"/>
</dbReference>
<dbReference type="SMR" id="B1LNB6"/>
<dbReference type="KEGG" id="ecm:EcSMS35_2613"/>
<dbReference type="HOGENOM" id="CLU_062658_6_0_6"/>
<dbReference type="Proteomes" id="UP000007011">
    <property type="component" value="Chromosome"/>
</dbReference>
<dbReference type="GO" id="GO:0005829">
    <property type="term" value="C:cytosol"/>
    <property type="evidence" value="ECO:0007669"/>
    <property type="project" value="TreeGrafter"/>
</dbReference>
<dbReference type="GO" id="GO:0016818">
    <property type="term" value="F:hydrolase activity, acting on acid anhydrides, in phosphorus-containing anhydrides"/>
    <property type="evidence" value="ECO:0007669"/>
    <property type="project" value="InterPro"/>
</dbReference>
<dbReference type="GO" id="GO:0046872">
    <property type="term" value="F:metal ion binding"/>
    <property type="evidence" value="ECO:0007669"/>
    <property type="project" value="UniProtKB-KW"/>
</dbReference>
<dbReference type="GO" id="GO:0006753">
    <property type="term" value="P:nucleoside phosphate metabolic process"/>
    <property type="evidence" value="ECO:0007669"/>
    <property type="project" value="TreeGrafter"/>
</dbReference>
<dbReference type="GO" id="GO:0019693">
    <property type="term" value="P:ribose phosphate metabolic process"/>
    <property type="evidence" value="ECO:0007669"/>
    <property type="project" value="TreeGrafter"/>
</dbReference>
<dbReference type="CDD" id="cd24157">
    <property type="entry name" value="NUDIX_GDPMK"/>
    <property type="match status" value="1"/>
</dbReference>
<dbReference type="FunFam" id="3.90.79.10:FF:000010">
    <property type="entry name" value="GDP-mannose pyrophosphatase NudK"/>
    <property type="match status" value="1"/>
</dbReference>
<dbReference type="Gene3D" id="3.90.79.10">
    <property type="entry name" value="Nucleoside Triphosphate Pyrophosphohydrolase"/>
    <property type="match status" value="1"/>
</dbReference>
<dbReference type="InterPro" id="IPR004385">
    <property type="entry name" value="NDP_pyrophosphatase"/>
</dbReference>
<dbReference type="InterPro" id="IPR015797">
    <property type="entry name" value="NUDIX_hydrolase-like_dom_sf"/>
</dbReference>
<dbReference type="InterPro" id="IPR000086">
    <property type="entry name" value="NUDIX_hydrolase_dom"/>
</dbReference>
<dbReference type="NCBIfam" id="TIGR00052">
    <property type="entry name" value="nudix-type nucleoside diphosphatase, YffH/AdpP family"/>
    <property type="match status" value="1"/>
</dbReference>
<dbReference type="NCBIfam" id="NF011585">
    <property type="entry name" value="PRK15009.1"/>
    <property type="match status" value="1"/>
</dbReference>
<dbReference type="PANTHER" id="PTHR11839:SF18">
    <property type="entry name" value="NUDIX HYDROLASE DOMAIN-CONTAINING PROTEIN"/>
    <property type="match status" value="1"/>
</dbReference>
<dbReference type="PANTHER" id="PTHR11839">
    <property type="entry name" value="UDP/ADP-SUGAR PYROPHOSPHATASE"/>
    <property type="match status" value="1"/>
</dbReference>
<dbReference type="Pfam" id="PF00293">
    <property type="entry name" value="NUDIX"/>
    <property type="match status" value="1"/>
</dbReference>
<dbReference type="SUPFAM" id="SSF55811">
    <property type="entry name" value="Nudix"/>
    <property type="match status" value="1"/>
</dbReference>
<dbReference type="PROSITE" id="PS51462">
    <property type="entry name" value="NUDIX"/>
    <property type="match status" value="1"/>
</dbReference>
<evidence type="ECO:0000250" key="1">
    <source>
        <dbReference type="UniProtKB" id="P37128"/>
    </source>
</evidence>
<evidence type="ECO:0000255" key="2">
    <source>
        <dbReference type="PROSITE-ProRule" id="PRU00794"/>
    </source>
</evidence>
<evidence type="ECO:0000305" key="3"/>